<comment type="function">
    <text evidence="1">Catalyzes the conversion of dethiobiotin (DTB) to biotin by the insertion of a sulfur atom into dethiobiotin via a radical-based mechanism.</text>
</comment>
<comment type="catalytic activity">
    <reaction evidence="1">
        <text>(4R,5S)-dethiobiotin + (sulfur carrier)-SH + 2 reduced [2Fe-2S]-[ferredoxin] + 2 S-adenosyl-L-methionine = (sulfur carrier)-H + biotin + 2 5'-deoxyadenosine + 2 L-methionine + 2 oxidized [2Fe-2S]-[ferredoxin]</text>
        <dbReference type="Rhea" id="RHEA:22060"/>
        <dbReference type="Rhea" id="RHEA-COMP:10000"/>
        <dbReference type="Rhea" id="RHEA-COMP:10001"/>
        <dbReference type="Rhea" id="RHEA-COMP:14737"/>
        <dbReference type="Rhea" id="RHEA-COMP:14739"/>
        <dbReference type="ChEBI" id="CHEBI:17319"/>
        <dbReference type="ChEBI" id="CHEBI:29917"/>
        <dbReference type="ChEBI" id="CHEBI:33737"/>
        <dbReference type="ChEBI" id="CHEBI:33738"/>
        <dbReference type="ChEBI" id="CHEBI:57586"/>
        <dbReference type="ChEBI" id="CHEBI:57844"/>
        <dbReference type="ChEBI" id="CHEBI:59789"/>
        <dbReference type="ChEBI" id="CHEBI:64428"/>
        <dbReference type="ChEBI" id="CHEBI:149473"/>
        <dbReference type="EC" id="2.8.1.6"/>
    </reaction>
</comment>
<comment type="cofactor">
    <cofactor evidence="1">
        <name>[4Fe-4S] cluster</name>
        <dbReference type="ChEBI" id="CHEBI:49883"/>
    </cofactor>
    <text evidence="1">Binds 1 [4Fe-4S] cluster. The cluster is coordinated with 3 cysteines and an exchangeable S-adenosyl-L-methionine.</text>
</comment>
<comment type="cofactor">
    <cofactor evidence="1">
        <name>[2Fe-2S] cluster</name>
        <dbReference type="ChEBI" id="CHEBI:190135"/>
    </cofactor>
    <text evidence="1">Binds 1 [2Fe-2S] cluster. The cluster is coordinated with 3 cysteines and 1 arginine.</text>
</comment>
<comment type="pathway">
    <text evidence="1">Cofactor biosynthesis; biotin biosynthesis; biotin from 7,8-diaminononanoate: step 2/2.</text>
</comment>
<comment type="subunit">
    <text evidence="1">Homodimer.</text>
</comment>
<comment type="similarity">
    <text evidence="1">Belongs to the radical SAM superfamily. Biotin synthase family.</text>
</comment>
<proteinExistence type="inferred from homology"/>
<protein>
    <recommendedName>
        <fullName evidence="1">Biotin synthase</fullName>
        <ecNumber evidence="1">2.8.1.6</ecNumber>
    </recommendedName>
</protein>
<reference key="1">
    <citation type="journal article" date="2011" name="Appl. Environ. Microbiol.">
        <title>Genomic potential of Marinobacter aquaeolei, a biogeochemical 'opportunitroph'.</title>
        <authorList>
            <person name="Singer E."/>
            <person name="Webb E.A."/>
            <person name="Nelson W.C."/>
            <person name="Heidelberg J.F."/>
            <person name="Ivanova N."/>
            <person name="Pati A."/>
            <person name="Edwards K.J."/>
        </authorList>
    </citation>
    <scope>NUCLEOTIDE SEQUENCE [LARGE SCALE GENOMIC DNA]</scope>
    <source>
        <strain>ATCC 700491 / DSM 11845 / VT8</strain>
    </source>
</reference>
<feature type="chain" id="PRO_0000381454" description="Biotin synthase">
    <location>
        <begin position="1"/>
        <end position="352"/>
    </location>
</feature>
<feature type="domain" description="Radical SAM core" evidence="2">
    <location>
        <begin position="41"/>
        <end position="268"/>
    </location>
</feature>
<feature type="binding site" evidence="1">
    <location>
        <position position="56"/>
    </location>
    <ligand>
        <name>[4Fe-4S] cluster</name>
        <dbReference type="ChEBI" id="CHEBI:49883"/>
        <note>4Fe-4S-S-AdoMet</note>
    </ligand>
</feature>
<feature type="binding site" evidence="1">
    <location>
        <position position="60"/>
    </location>
    <ligand>
        <name>[4Fe-4S] cluster</name>
        <dbReference type="ChEBI" id="CHEBI:49883"/>
        <note>4Fe-4S-S-AdoMet</note>
    </ligand>
</feature>
<feature type="binding site" evidence="1">
    <location>
        <position position="63"/>
    </location>
    <ligand>
        <name>[4Fe-4S] cluster</name>
        <dbReference type="ChEBI" id="CHEBI:49883"/>
        <note>4Fe-4S-S-AdoMet</note>
    </ligand>
</feature>
<feature type="binding site" evidence="1">
    <location>
        <position position="100"/>
    </location>
    <ligand>
        <name>[2Fe-2S] cluster</name>
        <dbReference type="ChEBI" id="CHEBI:190135"/>
    </ligand>
</feature>
<feature type="binding site" evidence="1">
    <location>
        <position position="131"/>
    </location>
    <ligand>
        <name>[2Fe-2S] cluster</name>
        <dbReference type="ChEBI" id="CHEBI:190135"/>
    </ligand>
</feature>
<feature type="binding site" evidence="1">
    <location>
        <position position="191"/>
    </location>
    <ligand>
        <name>[2Fe-2S] cluster</name>
        <dbReference type="ChEBI" id="CHEBI:190135"/>
    </ligand>
</feature>
<feature type="binding site" evidence="1">
    <location>
        <position position="263"/>
    </location>
    <ligand>
        <name>[2Fe-2S] cluster</name>
        <dbReference type="ChEBI" id="CHEBI:190135"/>
    </ligand>
</feature>
<accession>A1U4B2</accession>
<keyword id="KW-0001">2Fe-2S</keyword>
<keyword id="KW-0004">4Fe-4S</keyword>
<keyword id="KW-0093">Biotin biosynthesis</keyword>
<keyword id="KW-0408">Iron</keyword>
<keyword id="KW-0411">Iron-sulfur</keyword>
<keyword id="KW-0479">Metal-binding</keyword>
<keyword id="KW-0949">S-adenosyl-L-methionine</keyword>
<keyword id="KW-0808">Transferase</keyword>
<gene>
    <name evidence="1" type="primary">bioB</name>
    <name type="ordered locus">Maqu_2756</name>
</gene>
<organism>
    <name type="scientific">Marinobacter nauticus (strain ATCC 700491 / DSM 11845 / VT8)</name>
    <name type="common">Marinobacter aquaeolei</name>
    <dbReference type="NCBI Taxonomy" id="351348"/>
    <lineage>
        <taxon>Bacteria</taxon>
        <taxon>Pseudomonadati</taxon>
        <taxon>Pseudomonadota</taxon>
        <taxon>Gammaproteobacteria</taxon>
        <taxon>Pseudomonadales</taxon>
        <taxon>Marinobacteraceae</taxon>
        <taxon>Marinobacter</taxon>
    </lineage>
</organism>
<sequence>MTATATRHDWTLQEARELFNLPFNDLLFRAQSIHREHFDPNEVQVSTLLSIKTGACPEDCKYCPQSGHYNTGLEKEKLLEIEKVVAEARVAREKGASRFCMGAAWRSPSKKDMPYVLDMVRQVKSLGLETCMTLGMLKEEEAKELADAGLDYYNHNLDTSEKYYNHIITTRTYQDRLDTLDNVRKAGMKVCCGGIMGMGEDEDDRVGLLVQLANLPQHPESVPVNMLVKVKGTPLEDVEDLDPFDFIRIIAVARIMMPASHVRLSAGREQMNEQMQALCFMAGANSIFYGEKLLTTSNPEADADMQLFRKLGIRPEQREQCATEEQEEEAIAEAVEYEATRHMFYDATRESA</sequence>
<name>BIOB_MARN8</name>
<dbReference type="EC" id="2.8.1.6" evidence="1"/>
<dbReference type="EMBL" id="CP000514">
    <property type="protein sequence ID" value="ABM19831.1"/>
    <property type="molecule type" value="Genomic_DNA"/>
</dbReference>
<dbReference type="RefSeq" id="WP_011786201.1">
    <property type="nucleotide sequence ID" value="NC_008740.1"/>
</dbReference>
<dbReference type="SMR" id="A1U4B2"/>
<dbReference type="STRING" id="351348.Maqu_2756"/>
<dbReference type="KEGG" id="maq:Maqu_2756"/>
<dbReference type="eggNOG" id="COG0502">
    <property type="taxonomic scope" value="Bacteria"/>
</dbReference>
<dbReference type="HOGENOM" id="CLU_033172_1_2_6"/>
<dbReference type="OrthoDB" id="9786826at2"/>
<dbReference type="UniPathway" id="UPA00078">
    <property type="reaction ID" value="UER00162"/>
</dbReference>
<dbReference type="Proteomes" id="UP000000998">
    <property type="component" value="Chromosome"/>
</dbReference>
<dbReference type="GO" id="GO:0051537">
    <property type="term" value="F:2 iron, 2 sulfur cluster binding"/>
    <property type="evidence" value="ECO:0007669"/>
    <property type="project" value="UniProtKB-KW"/>
</dbReference>
<dbReference type="GO" id="GO:0051539">
    <property type="term" value="F:4 iron, 4 sulfur cluster binding"/>
    <property type="evidence" value="ECO:0007669"/>
    <property type="project" value="UniProtKB-KW"/>
</dbReference>
<dbReference type="GO" id="GO:0004076">
    <property type="term" value="F:biotin synthase activity"/>
    <property type="evidence" value="ECO:0007669"/>
    <property type="project" value="UniProtKB-UniRule"/>
</dbReference>
<dbReference type="GO" id="GO:0005506">
    <property type="term" value="F:iron ion binding"/>
    <property type="evidence" value="ECO:0007669"/>
    <property type="project" value="UniProtKB-UniRule"/>
</dbReference>
<dbReference type="GO" id="GO:0009102">
    <property type="term" value="P:biotin biosynthetic process"/>
    <property type="evidence" value="ECO:0007669"/>
    <property type="project" value="UniProtKB-UniRule"/>
</dbReference>
<dbReference type="CDD" id="cd01335">
    <property type="entry name" value="Radical_SAM"/>
    <property type="match status" value="1"/>
</dbReference>
<dbReference type="FunFam" id="3.20.20.70:FF:000011">
    <property type="entry name" value="Biotin synthase"/>
    <property type="match status" value="1"/>
</dbReference>
<dbReference type="Gene3D" id="3.20.20.70">
    <property type="entry name" value="Aldolase class I"/>
    <property type="match status" value="1"/>
</dbReference>
<dbReference type="HAMAP" id="MF_01694">
    <property type="entry name" value="BioB"/>
    <property type="match status" value="1"/>
</dbReference>
<dbReference type="InterPro" id="IPR013785">
    <property type="entry name" value="Aldolase_TIM"/>
</dbReference>
<dbReference type="InterPro" id="IPR010722">
    <property type="entry name" value="BATS_dom"/>
</dbReference>
<dbReference type="InterPro" id="IPR002684">
    <property type="entry name" value="Biotin_synth/BioAB"/>
</dbReference>
<dbReference type="InterPro" id="IPR024177">
    <property type="entry name" value="Biotin_synthase"/>
</dbReference>
<dbReference type="InterPro" id="IPR006638">
    <property type="entry name" value="Elp3/MiaA/NifB-like_rSAM"/>
</dbReference>
<dbReference type="InterPro" id="IPR007197">
    <property type="entry name" value="rSAM"/>
</dbReference>
<dbReference type="NCBIfam" id="TIGR00433">
    <property type="entry name" value="bioB"/>
    <property type="match status" value="1"/>
</dbReference>
<dbReference type="PANTHER" id="PTHR22976">
    <property type="entry name" value="BIOTIN SYNTHASE"/>
    <property type="match status" value="1"/>
</dbReference>
<dbReference type="PANTHER" id="PTHR22976:SF2">
    <property type="entry name" value="BIOTIN SYNTHASE, MITOCHONDRIAL"/>
    <property type="match status" value="1"/>
</dbReference>
<dbReference type="Pfam" id="PF06968">
    <property type="entry name" value="BATS"/>
    <property type="match status" value="1"/>
</dbReference>
<dbReference type="Pfam" id="PF04055">
    <property type="entry name" value="Radical_SAM"/>
    <property type="match status" value="1"/>
</dbReference>
<dbReference type="PIRSF" id="PIRSF001619">
    <property type="entry name" value="Biotin_synth"/>
    <property type="match status" value="1"/>
</dbReference>
<dbReference type="SFLD" id="SFLDF00272">
    <property type="entry name" value="biotin_synthase"/>
    <property type="match status" value="1"/>
</dbReference>
<dbReference type="SFLD" id="SFLDG01278">
    <property type="entry name" value="biotin_synthase_like"/>
    <property type="match status" value="1"/>
</dbReference>
<dbReference type="SMART" id="SM00876">
    <property type="entry name" value="BATS"/>
    <property type="match status" value="1"/>
</dbReference>
<dbReference type="SMART" id="SM00729">
    <property type="entry name" value="Elp3"/>
    <property type="match status" value="1"/>
</dbReference>
<dbReference type="SUPFAM" id="SSF102114">
    <property type="entry name" value="Radical SAM enzymes"/>
    <property type="match status" value="1"/>
</dbReference>
<dbReference type="PROSITE" id="PS51918">
    <property type="entry name" value="RADICAL_SAM"/>
    <property type="match status" value="1"/>
</dbReference>
<evidence type="ECO:0000255" key="1">
    <source>
        <dbReference type="HAMAP-Rule" id="MF_01694"/>
    </source>
</evidence>
<evidence type="ECO:0000255" key="2">
    <source>
        <dbReference type="PROSITE-ProRule" id="PRU01266"/>
    </source>
</evidence>